<protein>
    <recommendedName>
        <fullName>2-dehydro-3-deoxygluconokinase</fullName>
        <ecNumber>2.7.1.45</ecNumber>
    </recommendedName>
    <alternativeName>
        <fullName>2-keto-3-deoxygluconokinase</fullName>
    </alternativeName>
    <alternativeName>
        <fullName>3-deoxy-2-oxo-D-gluconate kinase</fullName>
    </alternativeName>
    <alternativeName>
        <fullName>KDG kinase</fullName>
    </alternativeName>
</protein>
<sequence length="314" mass="35462">MKKIAFIGECMIELNGKPFAEMWQSYGGDTLNSATYLSRVSSSKEIQVHYVSALGTDNLSKQMLKYWQADGIQTNWVLQDEQHQPGLYLIQLDAQGERTFLYWRNQSAARYMVQHPDFAKVIAELQQVDVIYLSGISLAILPKNDRTFLIEQLSSLAKKGTEIVFDSNYRPKLWDSLEEAQDCYLQLLPSVNIALVTFDDEQALWKDKTSRDTLERLHKIGIPKVIVKCGKNGAIFSDRYLSQYGQVIPEPILNVVDTTSAGDSFNAGFLNGYLRNKSLEICCQQGNRIAGIVIQHKGAIIDKVAISHLQSEFN</sequence>
<dbReference type="EC" id="2.7.1.45"/>
<dbReference type="EMBL" id="L42023">
    <property type="protein sequence ID" value="AAC21727.1"/>
    <property type="molecule type" value="Genomic_DNA"/>
</dbReference>
<dbReference type="PIR" id="C64045">
    <property type="entry name" value="C64045"/>
</dbReference>
<dbReference type="RefSeq" id="NP_438222.1">
    <property type="nucleotide sequence ID" value="NC_000907.1"/>
</dbReference>
<dbReference type="SMR" id="P44482"/>
<dbReference type="STRING" id="71421.HI_0049"/>
<dbReference type="EnsemblBacteria" id="AAC21727">
    <property type="protein sequence ID" value="AAC21727"/>
    <property type="gene ID" value="HI_0049"/>
</dbReference>
<dbReference type="KEGG" id="hin:HI_0049"/>
<dbReference type="PATRIC" id="fig|71421.8.peg.49"/>
<dbReference type="eggNOG" id="COG0524">
    <property type="taxonomic scope" value="Bacteria"/>
</dbReference>
<dbReference type="HOGENOM" id="CLU_027634_8_0_6"/>
<dbReference type="OrthoDB" id="9776822at2"/>
<dbReference type="PhylomeDB" id="P44482"/>
<dbReference type="BioCyc" id="HINF71421:G1GJ1-50-MONOMER"/>
<dbReference type="UniPathway" id="UPA00856">
    <property type="reaction ID" value="UER00828"/>
</dbReference>
<dbReference type="Proteomes" id="UP000000579">
    <property type="component" value="Chromosome"/>
</dbReference>
<dbReference type="GO" id="GO:0005829">
    <property type="term" value="C:cytosol"/>
    <property type="evidence" value="ECO:0000318"/>
    <property type="project" value="GO_Central"/>
</dbReference>
<dbReference type="GO" id="GO:0008673">
    <property type="term" value="F:2-dehydro-3-deoxygluconokinase activity"/>
    <property type="evidence" value="ECO:0000318"/>
    <property type="project" value="GO_Central"/>
</dbReference>
<dbReference type="GO" id="GO:0005524">
    <property type="term" value="F:ATP binding"/>
    <property type="evidence" value="ECO:0007669"/>
    <property type="project" value="UniProtKB-KW"/>
</dbReference>
<dbReference type="GO" id="GO:0019698">
    <property type="term" value="P:D-galacturonate catabolic process"/>
    <property type="evidence" value="ECO:0000318"/>
    <property type="project" value="GO_Central"/>
</dbReference>
<dbReference type="GO" id="GO:0042840">
    <property type="term" value="P:D-glucuronate catabolic process"/>
    <property type="evidence" value="ECO:0000318"/>
    <property type="project" value="GO_Central"/>
</dbReference>
<dbReference type="GO" id="GO:0006974">
    <property type="term" value="P:DNA damage response"/>
    <property type="evidence" value="ECO:0000318"/>
    <property type="project" value="GO_Central"/>
</dbReference>
<dbReference type="CDD" id="cd01166">
    <property type="entry name" value="KdgK"/>
    <property type="match status" value="1"/>
</dbReference>
<dbReference type="FunFam" id="3.40.1190.20:FF:000011">
    <property type="entry name" value="2-dehydro-3-deoxygluconokinase, putative"/>
    <property type="match status" value="1"/>
</dbReference>
<dbReference type="Gene3D" id="3.40.1190.20">
    <property type="match status" value="1"/>
</dbReference>
<dbReference type="InterPro" id="IPR002173">
    <property type="entry name" value="Carboh/pur_kinase_PfkB_CS"/>
</dbReference>
<dbReference type="InterPro" id="IPR050306">
    <property type="entry name" value="PfkB_Carbo_kinase"/>
</dbReference>
<dbReference type="InterPro" id="IPR011611">
    <property type="entry name" value="PfkB_dom"/>
</dbReference>
<dbReference type="InterPro" id="IPR029056">
    <property type="entry name" value="Ribokinase-like"/>
</dbReference>
<dbReference type="PANTHER" id="PTHR43085:SF15">
    <property type="entry name" value="2-DEHYDRO-3-DEOXYGLUCONOKINASE"/>
    <property type="match status" value="1"/>
</dbReference>
<dbReference type="PANTHER" id="PTHR43085">
    <property type="entry name" value="HEXOKINASE FAMILY MEMBER"/>
    <property type="match status" value="1"/>
</dbReference>
<dbReference type="Pfam" id="PF00294">
    <property type="entry name" value="PfkB"/>
    <property type="match status" value="1"/>
</dbReference>
<dbReference type="SUPFAM" id="SSF53613">
    <property type="entry name" value="Ribokinase-like"/>
    <property type="match status" value="1"/>
</dbReference>
<dbReference type="PROSITE" id="PS00584">
    <property type="entry name" value="PFKB_KINASES_2"/>
    <property type="match status" value="1"/>
</dbReference>
<reference key="1">
    <citation type="journal article" date="1995" name="Science">
        <title>Whole-genome random sequencing and assembly of Haemophilus influenzae Rd.</title>
        <authorList>
            <person name="Fleischmann R.D."/>
            <person name="Adams M.D."/>
            <person name="White O."/>
            <person name="Clayton R.A."/>
            <person name="Kirkness E.F."/>
            <person name="Kerlavage A.R."/>
            <person name="Bult C.J."/>
            <person name="Tomb J.-F."/>
            <person name="Dougherty B.A."/>
            <person name="Merrick J.M."/>
            <person name="McKenney K."/>
            <person name="Sutton G.G."/>
            <person name="FitzHugh W."/>
            <person name="Fields C.A."/>
            <person name="Gocayne J.D."/>
            <person name="Scott J.D."/>
            <person name="Shirley R."/>
            <person name="Liu L.-I."/>
            <person name="Glodek A."/>
            <person name="Kelley J.M."/>
            <person name="Weidman J.F."/>
            <person name="Phillips C.A."/>
            <person name="Spriggs T."/>
            <person name="Hedblom E."/>
            <person name="Cotton M.D."/>
            <person name="Utterback T.R."/>
            <person name="Hanna M.C."/>
            <person name="Nguyen D.T."/>
            <person name="Saudek D.M."/>
            <person name="Brandon R.C."/>
            <person name="Fine L.D."/>
            <person name="Fritchman J.L."/>
            <person name="Fuhrmann J.L."/>
            <person name="Geoghagen N.S.M."/>
            <person name="Gnehm C.L."/>
            <person name="McDonald L.A."/>
            <person name="Small K.V."/>
            <person name="Fraser C.M."/>
            <person name="Smith H.O."/>
            <person name="Venter J.C."/>
        </authorList>
    </citation>
    <scope>NUCLEOTIDE SEQUENCE [LARGE SCALE GENOMIC DNA]</scope>
    <source>
        <strain>ATCC 51907 / DSM 11121 / KW20 / Rd</strain>
    </source>
</reference>
<organism>
    <name type="scientific">Haemophilus influenzae (strain ATCC 51907 / DSM 11121 / KW20 / Rd)</name>
    <dbReference type="NCBI Taxonomy" id="71421"/>
    <lineage>
        <taxon>Bacteria</taxon>
        <taxon>Pseudomonadati</taxon>
        <taxon>Pseudomonadota</taxon>
        <taxon>Gammaproteobacteria</taxon>
        <taxon>Pasteurellales</taxon>
        <taxon>Pasteurellaceae</taxon>
        <taxon>Haemophilus</taxon>
    </lineage>
</organism>
<name>KDGK_HAEIN</name>
<keyword id="KW-0067">ATP-binding</keyword>
<keyword id="KW-0119">Carbohydrate metabolism</keyword>
<keyword id="KW-0418">Kinase</keyword>
<keyword id="KW-0547">Nucleotide-binding</keyword>
<keyword id="KW-1185">Reference proteome</keyword>
<keyword id="KW-0808">Transferase</keyword>
<evidence type="ECO:0000250" key="1"/>
<evidence type="ECO:0000250" key="2">
    <source>
        <dbReference type="UniProtKB" id="Q97U29"/>
    </source>
</evidence>
<evidence type="ECO:0000305" key="3"/>
<feature type="chain" id="PRO_0000080087" description="2-dehydro-3-deoxygluconokinase">
    <location>
        <begin position="1"/>
        <end position="314"/>
    </location>
</feature>
<feature type="active site" description="Proton acceptor" evidence="2">
    <location>
        <position position="263"/>
    </location>
</feature>
<feature type="binding site" evidence="2">
    <location>
        <begin position="28"/>
        <end position="32"/>
    </location>
    <ligand>
        <name>substrate</name>
    </ligand>
</feature>
<feature type="binding site" evidence="2">
    <location>
        <position position="88"/>
    </location>
    <ligand>
        <name>substrate</name>
    </ligand>
</feature>
<feature type="binding site" evidence="2">
    <location>
        <begin position="102"/>
        <end position="104"/>
    </location>
    <ligand>
        <name>substrate</name>
    </ligand>
</feature>
<feature type="binding site" evidence="2">
    <location>
        <begin position="168"/>
        <end position="170"/>
    </location>
    <ligand>
        <name>ATP</name>
        <dbReference type="ChEBI" id="CHEBI:30616"/>
    </ligand>
</feature>
<feature type="binding site" evidence="2">
    <location>
        <position position="170"/>
    </location>
    <ligand>
        <name>substrate</name>
    </ligand>
</feature>
<feature type="binding site" evidence="2">
    <location>
        <begin position="228"/>
        <end position="233"/>
    </location>
    <ligand>
        <name>ATP</name>
        <dbReference type="ChEBI" id="CHEBI:30616"/>
    </ligand>
</feature>
<feature type="binding site" evidence="2">
    <location>
        <begin position="260"/>
        <end position="263"/>
    </location>
    <ligand>
        <name>ATP</name>
        <dbReference type="ChEBI" id="CHEBI:30616"/>
    </ligand>
</feature>
<feature type="binding site" evidence="2">
    <location>
        <position position="263"/>
    </location>
    <ligand>
        <name>substrate</name>
    </ligand>
</feature>
<comment type="function">
    <text evidence="1">Catalyzes the phosphorylation of 2-keto-3-deoxygluconate (KDG) to produce 2-keto-3-deoxy-6-phosphogluconate (KDPG).</text>
</comment>
<comment type="catalytic activity">
    <reaction>
        <text>2-dehydro-3-deoxy-D-gluconate + ATP = 2-dehydro-3-deoxy-6-phospho-D-gluconate + ADP + H(+)</text>
        <dbReference type="Rhea" id="RHEA:14797"/>
        <dbReference type="ChEBI" id="CHEBI:15378"/>
        <dbReference type="ChEBI" id="CHEBI:30616"/>
        <dbReference type="ChEBI" id="CHEBI:57569"/>
        <dbReference type="ChEBI" id="CHEBI:57990"/>
        <dbReference type="ChEBI" id="CHEBI:456216"/>
        <dbReference type="EC" id="2.7.1.45"/>
    </reaction>
</comment>
<comment type="pathway">
    <text>Carbohydrate acid metabolism; 2-dehydro-3-deoxy-D-gluconate degradation; D-glyceraldehyde 3-phosphate and pyruvate from 2-dehydro-3-deoxy-D-gluconate: step 1/2.</text>
</comment>
<comment type="similarity">
    <text evidence="3">Belongs to the carbohydrate kinase PfkB family.</text>
</comment>
<proteinExistence type="inferred from homology"/>
<gene>
    <name type="primary">kdgK</name>
    <name type="ordered locus">HI_0049</name>
</gene>
<accession>P44482</accession>